<sequence length="138" mass="15996">MIVRTLEECRQSERRVVAENWESVRMLLKDDHMGFSFHITTIYANTQTHIHYRNHLESVYCMSGEGEIEVVGGKTYPIQPGTLYILDQHDEHYLRAFSSEMVMACVFNPPLTGHEIHDAEGVYPLDKSELISQCHKEK</sequence>
<name>ECTC_VIBCM</name>
<accession>C3LW87</accession>
<comment type="function">
    <text evidence="1">Catalyzes the circularization of gamma-N-acetyl-alpha,gamma-diaminobutyric acid (ADABA) to ectoine (1,4,5,6-tetrahydro-2-methyl-4-pyrimidine carboxylic acid), which is an excellent osmoprotectant.</text>
</comment>
<comment type="catalytic activity">
    <reaction evidence="1">
        <text>(2S)-4-acetamido-2-aminobutanoate = L-ectoine + H2O</text>
        <dbReference type="Rhea" id="RHEA:17281"/>
        <dbReference type="ChEBI" id="CHEBI:15377"/>
        <dbReference type="ChEBI" id="CHEBI:58515"/>
        <dbReference type="ChEBI" id="CHEBI:58929"/>
        <dbReference type="EC" id="4.2.1.108"/>
    </reaction>
</comment>
<comment type="pathway">
    <text evidence="1">Amine and polyamine biosynthesis; ectoine biosynthesis; L-ectoine from L-aspartate 4-semialdehyde: step 3/3.</text>
</comment>
<comment type="similarity">
    <text evidence="1">Belongs to the ectoine synthase family.</text>
</comment>
<protein>
    <recommendedName>
        <fullName evidence="1">L-ectoine synthase</fullName>
        <ecNumber evidence="1">4.2.1.108</ecNumber>
    </recommendedName>
    <alternativeName>
        <fullName evidence="1">N-acetyldiaminobutyrate dehydratase</fullName>
    </alternativeName>
</protein>
<reference key="1">
    <citation type="journal article" date="2008" name="PLoS ONE">
        <title>A recalibrated molecular clock and independent origins for the cholera pandemic clones.</title>
        <authorList>
            <person name="Feng L."/>
            <person name="Reeves P.R."/>
            <person name="Lan R."/>
            <person name="Ren Y."/>
            <person name="Gao C."/>
            <person name="Zhou Z."/>
            <person name="Ren Y."/>
            <person name="Cheng J."/>
            <person name="Wang W."/>
            <person name="Wang J."/>
            <person name="Qian W."/>
            <person name="Li D."/>
            <person name="Wang L."/>
        </authorList>
    </citation>
    <scope>NUCLEOTIDE SEQUENCE [LARGE SCALE GENOMIC DNA]</scope>
    <source>
        <strain>M66-2</strain>
    </source>
</reference>
<organism>
    <name type="scientific">Vibrio cholerae serotype O1 (strain M66-2)</name>
    <dbReference type="NCBI Taxonomy" id="579112"/>
    <lineage>
        <taxon>Bacteria</taxon>
        <taxon>Pseudomonadati</taxon>
        <taxon>Pseudomonadota</taxon>
        <taxon>Gammaproteobacteria</taxon>
        <taxon>Vibrionales</taxon>
        <taxon>Vibrionaceae</taxon>
        <taxon>Vibrio</taxon>
    </lineage>
</organism>
<feature type="chain" id="PRO_1000165103" description="L-ectoine synthase">
    <location>
        <begin position="1"/>
        <end position="138"/>
    </location>
</feature>
<dbReference type="EC" id="4.2.1.108" evidence="1"/>
<dbReference type="EMBL" id="CP001234">
    <property type="protein sequence ID" value="ACP07742.1"/>
    <property type="molecule type" value="Genomic_DNA"/>
</dbReference>
<dbReference type="RefSeq" id="WP_000637098.1">
    <property type="nucleotide sequence ID" value="NC_012580.1"/>
</dbReference>
<dbReference type="SMR" id="C3LW87"/>
<dbReference type="KEGG" id="vcm:VCM66_A0782"/>
<dbReference type="HOGENOM" id="CLU_154525_0_0_6"/>
<dbReference type="UniPathway" id="UPA00067">
    <property type="reaction ID" value="UER00123"/>
</dbReference>
<dbReference type="Proteomes" id="UP000001217">
    <property type="component" value="Chromosome II"/>
</dbReference>
<dbReference type="GO" id="GO:0033990">
    <property type="term" value="F:ectoine synthase activity"/>
    <property type="evidence" value="ECO:0007669"/>
    <property type="project" value="UniProtKB-EC"/>
</dbReference>
<dbReference type="GO" id="GO:0019491">
    <property type="term" value="P:ectoine biosynthetic process"/>
    <property type="evidence" value="ECO:0007669"/>
    <property type="project" value="UniProtKB-UniRule"/>
</dbReference>
<dbReference type="CDD" id="cd06978">
    <property type="entry name" value="cupin_EctC"/>
    <property type="match status" value="1"/>
</dbReference>
<dbReference type="Gene3D" id="2.60.120.10">
    <property type="entry name" value="Jelly Rolls"/>
    <property type="match status" value="1"/>
</dbReference>
<dbReference type="HAMAP" id="MF_01255">
    <property type="entry name" value="Ectoine_synth"/>
    <property type="match status" value="1"/>
</dbReference>
<dbReference type="InterPro" id="IPR010462">
    <property type="entry name" value="Ectoine_synth"/>
</dbReference>
<dbReference type="InterPro" id="IPR014710">
    <property type="entry name" value="RmlC-like_jellyroll"/>
</dbReference>
<dbReference type="InterPro" id="IPR011051">
    <property type="entry name" value="RmlC_Cupin_sf"/>
</dbReference>
<dbReference type="NCBIfam" id="NF009806">
    <property type="entry name" value="PRK13290.1"/>
    <property type="match status" value="1"/>
</dbReference>
<dbReference type="PANTHER" id="PTHR39289">
    <property type="match status" value="1"/>
</dbReference>
<dbReference type="PANTHER" id="PTHR39289:SF1">
    <property type="entry name" value="L-ECTOINE SYNTHASE"/>
    <property type="match status" value="1"/>
</dbReference>
<dbReference type="Pfam" id="PF06339">
    <property type="entry name" value="Ectoine_synth"/>
    <property type="match status" value="1"/>
</dbReference>
<dbReference type="SUPFAM" id="SSF51182">
    <property type="entry name" value="RmlC-like cupins"/>
    <property type="match status" value="1"/>
</dbReference>
<keyword id="KW-0456">Lyase</keyword>
<gene>
    <name evidence="1" type="primary">ectC</name>
    <name type="ordered locus">VCM66_A0782</name>
</gene>
<evidence type="ECO:0000255" key="1">
    <source>
        <dbReference type="HAMAP-Rule" id="MF_01255"/>
    </source>
</evidence>
<proteinExistence type="inferred from homology"/>